<dbReference type="EC" id="3.6.5.3" evidence="2"/>
<dbReference type="EMBL" id="CP000572">
    <property type="protein sequence ID" value="ABN91155.1"/>
    <property type="molecule type" value="Genomic_DNA"/>
</dbReference>
<dbReference type="EMBL" id="CP000572">
    <property type="protein sequence ID" value="ABN92409.1"/>
    <property type="molecule type" value="Genomic_DNA"/>
</dbReference>
<dbReference type="SMR" id="A3P0B5"/>
<dbReference type="KEGG" id="bpl:BURPS1106A_3806"/>
<dbReference type="KEGG" id="bpl:BURPS1106A_3824"/>
<dbReference type="HOGENOM" id="CLU_007265_0_0_4"/>
<dbReference type="Proteomes" id="UP000006738">
    <property type="component" value="Chromosome I"/>
</dbReference>
<dbReference type="GO" id="GO:0005737">
    <property type="term" value="C:cytoplasm"/>
    <property type="evidence" value="ECO:0007669"/>
    <property type="project" value="UniProtKB-SubCell"/>
</dbReference>
<dbReference type="GO" id="GO:0005525">
    <property type="term" value="F:GTP binding"/>
    <property type="evidence" value="ECO:0007669"/>
    <property type="project" value="UniProtKB-UniRule"/>
</dbReference>
<dbReference type="GO" id="GO:0003924">
    <property type="term" value="F:GTPase activity"/>
    <property type="evidence" value="ECO:0007669"/>
    <property type="project" value="InterPro"/>
</dbReference>
<dbReference type="GO" id="GO:0097216">
    <property type="term" value="F:guanosine tetraphosphate binding"/>
    <property type="evidence" value="ECO:0007669"/>
    <property type="project" value="UniProtKB-ARBA"/>
</dbReference>
<dbReference type="GO" id="GO:0003746">
    <property type="term" value="F:translation elongation factor activity"/>
    <property type="evidence" value="ECO:0007669"/>
    <property type="project" value="UniProtKB-UniRule"/>
</dbReference>
<dbReference type="CDD" id="cd01884">
    <property type="entry name" value="EF_Tu"/>
    <property type="match status" value="1"/>
</dbReference>
<dbReference type="CDD" id="cd03697">
    <property type="entry name" value="EFTU_II"/>
    <property type="match status" value="1"/>
</dbReference>
<dbReference type="CDD" id="cd03707">
    <property type="entry name" value="EFTU_III"/>
    <property type="match status" value="1"/>
</dbReference>
<dbReference type="FunFam" id="2.40.30.10:FF:000001">
    <property type="entry name" value="Elongation factor Tu"/>
    <property type="match status" value="1"/>
</dbReference>
<dbReference type="FunFam" id="3.40.50.300:FF:000003">
    <property type="entry name" value="Elongation factor Tu"/>
    <property type="match status" value="1"/>
</dbReference>
<dbReference type="Gene3D" id="3.40.50.300">
    <property type="entry name" value="P-loop containing nucleotide triphosphate hydrolases"/>
    <property type="match status" value="1"/>
</dbReference>
<dbReference type="Gene3D" id="2.40.30.10">
    <property type="entry name" value="Translation factors"/>
    <property type="match status" value="2"/>
</dbReference>
<dbReference type="HAMAP" id="MF_00118_B">
    <property type="entry name" value="EF_Tu_B"/>
    <property type="match status" value="1"/>
</dbReference>
<dbReference type="InterPro" id="IPR041709">
    <property type="entry name" value="EF-Tu_GTP-bd"/>
</dbReference>
<dbReference type="InterPro" id="IPR050055">
    <property type="entry name" value="EF-Tu_GTPase"/>
</dbReference>
<dbReference type="InterPro" id="IPR004161">
    <property type="entry name" value="EFTu-like_2"/>
</dbReference>
<dbReference type="InterPro" id="IPR033720">
    <property type="entry name" value="EFTU_2"/>
</dbReference>
<dbReference type="InterPro" id="IPR031157">
    <property type="entry name" value="G_TR_CS"/>
</dbReference>
<dbReference type="InterPro" id="IPR027417">
    <property type="entry name" value="P-loop_NTPase"/>
</dbReference>
<dbReference type="InterPro" id="IPR005225">
    <property type="entry name" value="Small_GTP-bd"/>
</dbReference>
<dbReference type="InterPro" id="IPR000795">
    <property type="entry name" value="T_Tr_GTP-bd_dom"/>
</dbReference>
<dbReference type="InterPro" id="IPR009000">
    <property type="entry name" value="Transl_B-barrel_sf"/>
</dbReference>
<dbReference type="InterPro" id="IPR009001">
    <property type="entry name" value="Transl_elong_EF1A/Init_IF2_C"/>
</dbReference>
<dbReference type="InterPro" id="IPR004541">
    <property type="entry name" value="Transl_elong_EFTu/EF1A_bac/org"/>
</dbReference>
<dbReference type="InterPro" id="IPR004160">
    <property type="entry name" value="Transl_elong_EFTu/EF1A_C"/>
</dbReference>
<dbReference type="NCBIfam" id="TIGR00485">
    <property type="entry name" value="EF-Tu"/>
    <property type="match status" value="1"/>
</dbReference>
<dbReference type="NCBIfam" id="NF000766">
    <property type="entry name" value="PRK00049.1"/>
    <property type="match status" value="1"/>
</dbReference>
<dbReference type="NCBIfam" id="NF009372">
    <property type="entry name" value="PRK12735.1"/>
    <property type="match status" value="1"/>
</dbReference>
<dbReference type="NCBIfam" id="NF009373">
    <property type="entry name" value="PRK12736.1"/>
    <property type="match status" value="1"/>
</dbReference>
<dbReference type="NCBIfam" id="TIGR00231">
    <property type="entry name" value="small_GTP"/>
    <property type="match status" value="1"/>
</dbReference>
<dbReference type="PANTHER" id="PTHR43721:SF22">
    <property type="entry name" value="ELONGATION FACTOR TU, MITOCHONDRIAL"/>
    <property type="match status" value="1"/>
</dbReference>
<dbReference type="PANTHER" id="PTHR43721">
    <property type="entry name" value="ELONGATION FACTOR TU-RELATED"/>
    <property type="match status" value="1"/>
</dbReference>
<dbReference type="Pfam" id="PF00009">
    <property type="entry name" value="GTP_EFTU"/>
    <property type="match status" value="1"/>
</dbReference>
<dbReference type="Pfam" id="PF03144">
    <property type="entry name" value="GTP_EFTU_D2"/>
    <property type="match status" value="1"/>
</dbReference>
<dbReference type="Pfam" id="PF03143">
    <property type="entry name" value="GTP_EFTU_D3"/>
    <property type="match status" value="1"/>
</dbReference>
<dbReference type="PRINTS" id="PR00315">
    <property type="entry name" value="ELONGATNFCT"/>
</dbReference>
<dbReference type="SUPFAM" id="SSF50465">
    <property type="entry name" value="EF-Tu/eEF-1alpha/eIF2-gamma C-terminal domain"/>
    <property type="match status" value="1"/>
</dbReference>
<dbReference type="SUPFAM" id="SSF52540">
    <property type="entry name" value="P-loop containing nucleoside triphosphate hydrolases"/>
    <property type="match status" value="1"/>
</dbReference>
<dbReference type="SUPFAM" id="SSF50447">
    <property type="entry name" value="Translation proteins"/>
    <property type="match status" value="1"/>
</dbReference>
<dbReference type="PROSITE" id="PS00301">
    <property type="entry name" value="G_TR_1"/>
    <property type="match status" value="1"/>
</dbReference>
<dbReference type="PROSITE" id="PS51722">
    <property type="entry name" value="G_TR_2"/>
    <property type="match status" value="1"/>
</dbReference>
<feature type="chain" id="PRO_0000337342" description="Elongation factor Tu">
    <location>
        <begin position="1"/>
        <end position="396"/>
    </location>
</feature>
<feature type="domain" description="tr-type G">
    <location>
        <begin position="10"/>
        <end position="206"/>
    </location>
</feature>
<feature type="region of interest" description="G1" evidence="1">
    <location>
        <begin position="19"/>
        <end position="26"/>
    </location>
</feature>
<feature type="region of interest" description="G2" evidence="1">
    <location>
        <begin position="60"/>
        <end position="64"/>
    </location>
</feature>
<feature type="region of interest" description="G3" evidence="1">
    <location>
        <begin position="81"/>
        <end position="84"/>
    </location>
</feature>
<feature type="region of interest" description="G4" evidence="1">
    <location>
        <begin position="136"/>
        <end position="139"/>
    </location>
</feature>
<feature type="region of interest" description="G5" evidence="1">
    <location>
        <begin position="174"/>
        <end position="176"/>
    </location>
</feature>
<feature type="binding site" evidence="2">
    <location>
        <begin position="19"/>
        <end position="26"/>
    </location>
    <ligand>
        <name>GTP</name>
        <dbReference type="ChEBI" id="CHEBI:37565"/>
    </ligand>
</feature>
<feature type="binding site" evidence="2">
    <location>
        <position position="26"/>
    </location>
    <ligand>
        <name>Mg(2+)</name>
        <dbReference type="ChEBI" id="CHEBI:18420"/>
    </ligand>
</feature>
<feature type="binding site" evidence="2">
    <location>
        <begin position="81"/>
        <end position="85"/>
    </location>
    <ligand>
        <name>GTP</name>
        <dbReference type="ChEBI" id="CHEBI:37565"/>
    </ligand>
</feature>
<feature type="binding site" evidence="2">
    <location>
        <begin position="136"/>
        <end position="139"/>
    </location>
    <ligand>
        <name>GTP</name>
        <dbReference type="ChEBI" id="CHEBI:37565"/>
    </ligand>
</feature>
<proteinExistence type="inferred from homology"/>
<reference key="1">
    <citation type="journal article" date="2010" name="Genome Biol. Evol.">
        <title>Continuing evolution of Burkholderia mallei through genome reduction and large-scale rearrangements.</title>
        <authorList>
            <person name="Losada L."/>
            <person name="Ronning C.M."/>
            <person name="DeShazer D."/>
            <person name="Woods D."/>
            <person name="Fedorova N."/>
            <person name="Kim H.S."/>
            <person name="Shabalina S.A."/>
            <person name="Pearson T.R."/>
            <person name="Brinkac L."/>
            <person name="Tan P."/>
            <person name="Nandi T."/>
            <person name="Crabtree J."/>
            <person name="Badger J."/>
            <person name="Beckstrom-Sternberg S."/>
            <person name="Saqib M."/>
            <person name="Schutzer S.E."/>
            <person name="Keim P."/>
            <person name="Nierman W.C."/>
        </authorList>
    </citation>
    <scope>NUCLEOTIDE SEQUENCE [LARGE SCALE GENOMIC DNA]</scope>
    <source>
        <strain>1106a</strain>
    </source>
</reference>
<name>EFTU_BURP0</name>
<comment type="function">
    <text evidence="2">GTP hydrolase that promotes the GTP-dependent binding of aminoacyl-tRNA to the A-site of ribosomes during protein biosynthesis.</text>
</comment>
<comment type="catalytic activity">
    <reaction evidence="2">
        <text>GTP + H2O = GDP + phosphate + H(+)</text>
        <dbReference type="Rhea" id="RHEA:19669"/>
        <dbReference type="ChEBI" id="CHEBI:15377"/>
        <dbReference type="ChEBI" id="CHEBI:15378"/>
        <dbReference type="ChEBI" id="CHEBI:37565"/>
        <dbReference type="ChEBI" id="CHEBI:43474"/>
        <dbReference type="ChEBI" id="CHEBI:58189"/>
        <dbReference type="EC" id="3.6.5.3"/>
    </reaction>
    <physiologicalReaction direction="left-to-right" evidence="2">
        <dbReference type="Rhea" id="RHEA:19670"/>
    </physiologicalReaction>
</comment>
<comment type="subunit">
    <text evidence="2">Monomer.</text>
</comment>
<comment type="subcellular location">
    <subcellularLocation>
        <location evidence="2">Cytoplasm</location>
    </subcellularLocation>
</comment>
<comment type="similarity">
    <text evidence="2">Belongs to the TRAFAC class translation factor GTPase superfamily. Classic translation factor GTPase family. EF-Tu/EF-1A subfamily.</text>
</comment>
<accession>A3P0B5</accession>
<evidence type="ECO:0000250" key="1"/>
<evidence type="ECO:0000255" key="2">
    <source>
        <dbReference type="HAMAP-Rule" id="MF_00118"/>
    </source>
</evidence>
<organism>
    <name type="scientific">Burkholderia pseudomallei (strain 1106a)</name>
    <dbReference type="NCBI Taxonomy" id="357348"/>
    <lineage>
        <taxon>Bacteria</taxon>
        <taxon>Pseudomonadati</taxon>
        <taxon>Pseudomonadota</taxon>
        <taxon>Betaproteobacteria</taxon>
        <taxon>Burkholderiales</taxon>
        <taxon>Burkholderiaceae</taxon>
        <taxon>Burkholderia</taxon>
        <taxon>pseudomallei group</taxon>
    </lineage>
</organism>
<protein>
    <recommendedName>
        <fullName evidence="2">Elongation factor Tu</fullName>
        <shortName evidence="2">EF-Tu</shortName>
        <ecNumber evidence="2">3.6.5.3</ecNumber>
    </recommendedName>
</protein>
<gene>
    <name evidence="2" type="primary">tuf1</name>
    <name type="ordered locus">BURPS1106A_3806</name>
</gene>
<gene>
    <name evidence="2" type="primary">tuf2</name>
    <name type="ordered locus">BURPS1106A_3824</name>
</gene>
<sequence>MAKEKFERTKPHVNVGTIGHVDHGKTTLTAAIATVLSAKFGGEAKKYDEIDAAPEEKARGITINTAHIEYETANRHYAHVDCPGHADYVKNMITGAAQMDGAILVCSAADGPMPQTREHILLARQVGVPYIIVFLNKCDMVDDAELLELVEMEVRELLSKYDFPGDDTPIIKGSAKLALEGDKGELGEVAIMNLADALDTYIPTPERAVDGAFLMPVEDVFSISGRGTVVTGRVERGVIKVGEEIEIVGIKATAKTTCTGVEMFRKLLDQGQAGDNVGILLRGTKREDVERGQVLAKPGSITPHTHFTAEVYVLSKDEGGRHTPFFNNYRPQFYFRTTDVTGSIELPKDKEMVMPGDNVSITVKLIAPIAMEEGLRFAIREGGRTVGAGVVAKIIE</sequence>
<keyword id="KW-0963">Cytoplasm</keyword>
<keyword id="KW-0251">Elongation factor</keyword>
<keyword id="KW-0342">GTP-binding</keyword>
<keyword id="KW-0378">Hydrolase</keyword>
<keyword id="KW-0460">Magnesium</keyword>
<keyword id="KW-0479">Metal-binding</keyword>
<keyword id="KW-0547">Nucleotide-binding</keyword>
<keyword id="KW-0648">Protein biosynthesis</keyword>